<protein>
    <recommendedName>
        <fullName evidence="1">DNA-binding protein Fis</fullName>
    </recommendedName>
</protein>
<dbReference type="EMBL" id="CP001144">
    <property type="protein sequence ID" value="ACH74941.1"/>
    <property type="molecule type" value="Genomic_DNA"/>
</dbReference>
<dbReference type="RefSeq" id="WP_000462905.1">
    <property type="nucleotide sequence ID" value="NC_011205.1"/>
</dbReference>
<dbReference type="SMR" id="B5FIW4"/>
<dbReference type="GeneID" id="98390389"/>
<dbReference type="KEGG" id="sed:SeD_A3746"/>
<dbReference type="HOGENOM" id="CLU_158040_3_0_6"/>
<dbReference type="Proteomes" id="UP000008322">
    <property type="component" value="Chromosome"/>
</dbReference>
<dbReference type="GO" id="GO:0003700">
    <property type="term" value="F:DNA-binding transcription factor activity"/>
    <property type="evidence" value="ECO:0007669"/>
    <property type="project" value="UniProtKB-UniRule"/>
</dbReference>
<dbReference type="GO" id="GO:0043565">
    <property type="term" value="F:sequence-specific DNA binding"/>
    <property type="evidence" value="ECO:0007669"/>
    <property type="project" value="InterPro"/>
</dbReference>
<dbReference type="FunFam" id="1.10.10.60:FF:000006">
    <property type="entry name" value="DNA-binding protein Fis"/>
    <property type="match status" value="1"/>
</dbReference>
<dbReference type="Gene3D" id="1.10.10.60">
    <property type="entry name" value="Homeodomain-like"/>
    <property type="match status" value="1"/>
</dbReference>
<dbReference type="HAMAP" id="MF_00166">
    <property type="entry name" value="DNA_binding_Fis"/>
    <property type="match status" value="1"/>
</dbReference>
<dbReference type="InterPro" id="IPR005412">
    <property type="entry name" value="Fis_DNA-bd"/>
</dbReference>
<dbReference type="InterPro" id="IPR009057">
    <property type="entry name" value="Homeodomain-like_sf"/>
</dbReference>
<dbReference type="InterPro" id="IPR002197">
    <property type="entry name" value="HTH_Fis"/>
</dbReference>
<dbReference type="InterPro" id="IPR050207">
    <property type="entry name" value="Trans_regulatory_Fis"/>
</dbReference>
<dbReference type="NCBIfam" id="NF001659">
    <property type="entry name" value="PRK00430.1"/>
    <property type="match status" value="1"/>
</dbReference>
<dbReference type="PANTHER" id="PTHR47918">
    <property type="entry name" value="DNA-BINDING PROTEIN FIS"/>
    <property type="match status" value="1"/>
</dbReference>
<dbReference type="PANTHER" id="PTHR47918:SF1">
    <property type="entry name" value="DNA-BINDING PROTEIN FIS"/>
    <property type="match status" value="1"/>
</dbReference>
<dbReference type="Pfam" id="PF02954">
    <property type="entry name" value="HTH_8"/>
    <property type="match status" value="1"/>
</dbReference>
<dbReference type="PIRSF" id="PIRSF002097">
    <property type="entry name" value="DNA-binding_Fis"/>
    <property type="match status" value="1"/>
</dbReference>
<dbReference type="PRINTS" id="PR01591">
    <property type="entry name" value="DNABINDNGFIS"/>
</dbReference>
<dbReference type="PRINTS" id="PR01590">
    <property type="entry name" value="HTHFIS"/>
</dbReference>
<dbReference type="SUPFAM" id="SSF46689">
    <property type="entry name" value="Homeodomain-like"/>
    <property type="match status" value="1"/>
</dbReference>
<proteinExistence type="inferred from homology"/>
<name>FIS_SALDC</name>
<evidence type="ECO:0000255" key="1">
    <source>
        <dbReference type="HAMAP-Rule" id="MF_00166"/>
    </source>
</evidence>
<feature type="chain" id="PRO_1000097458" description="DNA-binding protein Fis">
    <location>
        <begin position="1"/>
        <end position="98"/>
    </location>
</feature>
<feature type="DNA-binding region" description="H-T-H motif" evidence="1">
    <location>
        <begin position="74"/>
        <end position="93"/>
    </location>
</feature>
<accession>B5FIW4</accession>
<sequence>MFEQRVNSDVLTVSTVNSQDQVTQKPLRDSVKQALKNYFAQLNGQDVNDLYELVLAEVEQPLLDMVMQYTRGNQTRAALMMGINRGTLRKKLKKYGMN</sequence>
<organism>
    <name type="scientific">Salmonella dublin (strain CT_02021853)</name>
    <dbReference type="NCBI Taxonomy" id="439851"/>
    <lineage>
        <taxon>Bacteria</taxon>
        <taxon>Pseudomonadati</taxon>
        <taxon>Pseudomonadota</taxon>
        <taxon>Gammaproteobacteria</taxon>
        <taxon>Enterobacterales</taxon>
        <taxon>Enterobacteriaceae</taxon>
        <taxon>Salmonella</taxon>
    </lineage>
</organism>
<keyword id="KW-0010">Activator</keyword>
<keyword id="KW-0238">DNA-binding</keyword>
<keyword id="KW-0804">Transcription</keyword>
<keyword id="KW-0805">Transcription regulation</keyword>
<reference key="1">
    <citation type="journal article" date="2011" name="J. Bacteriol.">
        <title>Comparative genomics of 28 Salmonella enterica isolates: evidence for CRISPR-mediated adaptive sublineage evolution.</title>
        <authorList>
            <person name="Fricke W.F."/>
            <person name="Mammel M.K."/>
            <person name="McDermott P.F."/>
            <person name="Tartera C."/>
            <person name="White D.G."/>
            <person name="Leclerc J.E."/>
            <person name="Ravel J."/>
            <person name="Cebula T.A."/>
        </authorList>
    </citation>
    <scope>NUCLEOTIDE SEQUENCE [LARGE SCALE GENOMIC DNA]</scope>
    <source>
        <strain>CT_02021853</strain>
    </source>
</reference>
<comment type="function">
    <text evidence="1">Activates ribosomal RNA transcription. Plays a direct role in upstream activation of rRNA promoters.</text>
</comment>
<comment type="subunit">
    <text evidence="1">Homodimer.</text>
</comment>
<comment type="similarity">
    <text evidence="1">Belongs to the transcriptional regulatory Fis family.</text>
</comment>
<gene>
    <name evidence="1" type="primary">fis</name>
    <name type="ordered locus">SeD_A3746</name>
</gene>